<comment type="function">
    <text evidence="1">Catalyzes the conversion of L-lactate to pyruvate. Is coupled to the respiratory chain.</text>
</comment>
<comment type="catalytic activity">
    <reaction evidence="1">
        <text>(S)-lactate + A = pyruvate + AH2</text>
        <dbReference type="Rhea" id="RHEA:45816"/>
        <dbReference type="ChEBI" id="CHEBI:13193"/>
        <dbReference type="ChEBI" id="CHEBI:15361"/>
        <dbReference type="ChEBI" id="CHEBI:16651"/>
        <dbReference type="ChEBI" id="CHEBI:17499"/>
    </reaction>
</comment>
<comment type="cofactor">
    <cofactor evidence="1">
        <name>FMN</name>
        <dbReference type="ChEBI" id="CHEBI:58210"/>
    </cofactor>
</comment>
<comment type="subcellular location">
    <subcellularLocation>
        <location evidence="1">Cell inner membrane</location>
        <topology evidence="1">Peripheral membrane protein</topology>
    </subcellularLocation>
</comment>
<comment type="similarity">
    <text evidence="1">Belongs to the FMN-dependent alpha-hydroxy acid dehydrogenase family.</text>
</comment>
<name>LLDD_ACIB5</name>
<keyword id="KW-0997">Cell inner membrane</keyword>
<keyword id="KW-1003">Cell membrane</keyword>
<keyword id="KW-0285">Flavoprotein</keyword>
<keyword id="KW-0288">FMN</keyword>
<keyword id="KW-0472">Membrane</keyword>
<keyword id="KW-0560">Oxidoreductase</keyword>
<evidence type="ECO:0000255" key="1">
    <source>
        <dbReference type="HAMAP-Rule" id="MF_01559"/>
    </source>
</evidence>
<protein>
    <recommendedName>
        <fullName evidence="1">L-lactate dehydrogenase</fullName>
        <ecNumber evidence="1">1.1.-.-</ecNumber>
    </recommendedName>
</protein>
<gene>
    <name evidence="1" type="primary">lldD</name>
    <name type="ordered locus">AB57_0118</name>
</gene>
<organism>
    <name type="scientific">Acinetobacter baumannii (strain AB0057)</name>
    <dbReference type="NCBI Taxonomy" id="480119"/>
    <lineage>
        <taxon>Bacteria</taxon>
        <taxon>Pseudomonadati</taxon>
        <taxon>Pseudomonadota</taxon>
        <taxon>Gammaproteobacteria</taxon>
        <taxon>Moraxellales</taxon>
        <taxon>Moraxellaceae</taxon>
        <taxon>Acinetobacter</taxon>
        <taxon>Acinetobacter calcoaceticus/baumannii complex</taxon>
    </lineage>
</organism>
<dbReference type="EC" id="1.1.-.-" evidence="1"/>
<dbReference type="EMBL" id="CP001182">
    <property type="protein sequence ID" value="ACJ39549.1"/>
    <property type="molecule type" value="Genomic_DNA"/>
</dbReference>
<dbReference type="RefSeq" id="WP_000587282.1">
    <property type="nucleotide sequence ID" value="NC_011586.2"/>
</dbReference>
<dbReference type="SMR" id="B7IBS4"/>
<dbReference type="GeneID" id="92892082"/>
<dbReference type="KEGG" id="abn:AB57_0118"/>
<dbReference type="HOGENOM" id="CLU_020639_0_0_6"/>
<dbReference type="Proteomes" id="UP000007094">
    <property type="component" value="Chromosome"/>
</dbReference>
<dbReference type="GO" id="GO:0005886">
    <property type="term" value="C:plasma membrane"/>
    <property type="evidence" value="ECO:0007669"/>
    <property type="project" value="UniProtKB-SubCell"/>
</dbReference>
<dbReference type="GO" id="GO:0010181">
    <property type="term" value="F:FMN binding"/>
    <property type="evidence" value="ECO:0007669"/>
    <property type="project" value="InterPro"/>
</dbReference>
<dbReference type="GO" id="GO:0004459">
    <property type="term" value="F:L-lactate dehydrogenase activity"/>
    <property type="evidence" value="ECO:0007669"/>
    <property type="project" value="UniProtKB-UniRule"/>
</dbReference>
<dbReference type="GO" id="GO:0009060">
    <property type="term" value="P:aerobic respiration"/>
    <property type="evidence" value="ECO:0007669"/>
    <property type="project" value="TreeGrafter"/>
</dbReference>
<dbReference type="GO" id="GO:0006089">
    <property type="term" value="P:lactate metabolic process"/>
    <property type="evidence" value="ECO:0007669"/>
    <property type="project" value="UniProtKB-UniRule"/>
</dbReference>
<dbReference type="CDD" id="cd02809">
    <property type="entry name" value="alpha_hydroxyacid_oxid_FMN"/>
    <property type="match status" value="1"/>
</dbReference>
<dbReference type="FunFam" id="3.20.20.70:FF:000029">
    <property type="entry name" value="L-lactate dehydrogenase"/>
    <property type="match status" value="1"/>
</dbReference>
<dbReference type="Gene3D" id="3.20.20.70">
    <property type="entry name" value="Aldolase class I"/>
    <property type="match status" value="1"/>
</dbReference>
<dbReference type="HAMAP" id="MF_01559">
    <property type="entry name" value="L_lact_dehydr"/>
    <property type="match status" value="1"/>
</dbReference>
<dbReference type="InterPro" id="IPR013785">
    <property type="entry name" value="Aldolase_TIM"/>
</dbReference>
<dbReference type="InterPro" id="IPR012133">
    <property type="entry name" value="Alpha-hydoxy_acid_DH_FMN"/>
</dbReference>
<dbReference type="InterPro" id="IPR000262">
    <property type="entry name" value="FMN-dep_DH"/>
</dbReference>
<dbReference type="InterPro" id="IPR037396">
    <property type="entry name" value="FMN_HAD"/>
</dbReference>
<dbReference type="InterPro" id="IPR008259">
    <property type="entry name" value="FMN_hydac_DH_AS"/>
</dbReference>
<dbReference type="InterPro" id="IPR020920">
    <property type="entry name" value="LldD"/>
</dbReference>
<dbReference type="NCBIfam" id="NF033901">
    <property type="entry name" value="L_lactate_LldD"/>
    <property type="match status" value="1"/>
</dbReference>
<dbReference type="NCBIfam" id="NF008398">
    <property type="entry name" value="PRK11197.1"/>
    <property type="match status" value="1"/>
</dbReference>
<dbReference type="PANTHER" id="PTHR10578:SF85">
    <property type="entry name" value="L-LACTATE DEHYDROGENASE"/>
    <property type="match status" value="1"/>
</dbReference>
<dbReference type="PANTHER" id="PTHR10578">
    <property type="entry name" value="S -2-HYDROXY-ACID OXIDASE-RELATED"/>
    <property type="match status" value="1"/>
</dbReference>
<dbReference type="Pfam" id="PF01070">
    <property type="entry name" value="FMN_dh"/>
    <property type="match status" value="1"/>
</dbReference>
<dbReference type="PIRSF" id="PIRSF000138">
    <property type="entry name" value="Al-hdrx_acd_dh"/>
    <property type="match status" value="1"/>
</dbReference>
<dbReference type="SUPFAM" id="SSF51395">
    <property type="entry name" value="FMN-linked oxidoreductases"/>
    <property type="match status" value="1"/>
</dbReference>
<dbReference type="PROSITE" id="PS00557">
    <property type="entry name" value="FMN_HYDROXY_ACID_DH_1"/>
    <property type="match status" value="1"/>
</dbReference>
<dbReference type="PROSITE" id="PS51349">
    <property type="entry name" value="FMN_HYDROXY_ACID_DH_2"/>
    <property type="match status" value="1"/>
</dbReference>
<feature type="chain" id="PRO_0000383404" description="L-lactate dehydrogenase">
    <location>
        <begin position="1"/>
        <end position="383"/>
    </location>
</feature>
<feature type="domain" description="FMN hydroxy acid dehydrogenase" evidence="1">
    <location>
        <begin position="1"/>
        <end position="380"/>
    </location>
</feature>
<feature type="active site" description="Proton acceptor" evidence="1">
    <location>
        <position position="275"/>
    </location>
</feature>
<feature type="binding site" evidence="1">
    <location>
        <position position="24"/>
    </location>
    <ligand>
        <name>substrate</name>
    </ligand>
</feature>
<feature type="binding site" evidence="1">
    <location>
        <position position="106"/>
    </location>
    <ligand>
        <name>FMN</name>
        <dbReference type="ChEBI" id="CHEBI:58210"/>
    </ligand>
</feature>
<feature type="binding site" evidence="1">
    <location>
        <position position="127"/>
    </location>
    <ligand>
        <name>FMN</name>
        <dbReference type="ChEBI" id="CHEBI:58210"/>
    </ligand>
</feature>
<feature type="binding site" evidence="1">
    <location>
        <position position="129"/>
    </location>
    <ligand>
        <name>substrate</name>
    </ligand>
</feature>
<feature type="binding site" evidence="1">
    <location>
        <position position="155"/>
    </location>
    <ligand>
        <name>FMN</name>
        <dbReference type="ChEBI" id="CHEBI:58210"/>
    </ligand>
</feature>
<feature type="binding site" evidence="1">
    <location>
        <position position="164"/>
    </location>
    <ligand>
        <name>substrate</name>
    </ligand>
</feature>
<feature type="binding site" evidence="1">
    <location>
        <position position="251"/>
    </location>
    <ligand>
        <name>FMN</name>
        <dbReference type="ChEBI" id="CHEBI:58210"/>
    </ligand>
</feature>
<feature type="binding site" evidence="1">
    <location>
        <position position="278"/>
    </location>
    <ligand>
        <name>substrate</name>
    </ligand>
</feature>
<feature type="binding site" evidence="1">
    <location>
        <begin position="306"/>
        <end position="330"/>
    </location>
    <ligand>
        <name>FMN</name>
        <dbReference type="ChEBI" id="CHEBI:58210"/>
    </ligand>
</feature>
<accession>B7IBS4</accession>
<proteinExistence type="inferred from homology"/>
<reference key="1">
    <citation type="journal article" date="2008" name="J. Bacteriol.">
        <title>Comparative genome sequence analysis of multidrug-resistant Acinetobacter baumannii.</title>
        <authorList>
            <person name="Adams M.D."/>
            <person name="Goglin K."/>
            <person name="Molyneaux N."/>
            <person name="Hujer K.M."/>
            <person name="Lavender H."/>
            <person name="Jamison J.J."/>
            <person name="MacDonald I.J."/>
            <person name="Martin K.M."/>
            <person name="Russo T."/>
            <person name="Campagnari A.A."/>
            <person name="Hujer A.M."/>
            <person name="Bonomo R.A."/>
            <person name="Gill S.R."/>
        </authorList>
    </citation>
    <scope>NUCLEOTIDE SEQUENCE [LARGE SCALE GENOMIC DNA]</scope>
    <source>
        <strain>AB0057</strain>
    </source>
</reference>
<sequence>MIISSGNDYRAAAQRRLPPFLFHYIDGGAYAEYTLKRNVQDLSEIALRQRVLNDMSALSLETKLFNETLSMPVALAPVGLTGMYARRGEVQAAMAADKKGIPFTLSTVSVCPIEEVAPAINRPMWFQLYVLRDRGFMRNALERAKAAGCSTLVFTVDMPVPGARYRDAHSGMSGPNAAMRRYMQSVFHPHWSWNVGLMGRPHDLGNISKYLGKPTGLEDYIGWLGSNFDPSISWKDLEWIREFWDGPMVIKGILDPEDAKDAVRFGADGIVVSNHGGRQLDGVMSSARALPAIADAVKGDLAILADSGIRNGLDVVRMLALGADTVLLGRAFVYALAAAGGQGVSNLLDLIDKEMRVAMTLTGAKSISDINADCLVQAIKQGL</sequence>